<dbReference type="EMBL" id="X69485">
    <property type="protein sequence ID" value="CAA49240.1"/>
    <property type="molecule type" value="mRNA"/>
</dbReference>
<dbReference type="SMR" id="Q06381"/>
<dbReference type="GO" id="GO:0005576">
    <property type="term" value="C:extracellular region"/>
    <property type="evidence" value="ECO:0007669"/>
    <property type="project" value="UniProtKB-SubCell"/>
</dbReference>
<dbReference type="GO" id="GO:0044155">
    <property type="term" value="C:host caveola"/>
    <property type="evidence" value="ECO:0007669"/>
    <property type="project" value="UniProtKB-SubCell"/>
</dbReference>
<dbReference type="GO" id="GO:0044169">
    <property type="term" value="C:host cell rough endoplasmic reticulum membrane"/>
    <property type="evidence" value="ECO:0007669"/>
    <property type="project" value="UniProtKB-SubCell"/>
</dbReference>
<dbReference type="GO" id="GO:0016020">
    <property type="term" value="C:membrane"/>
    <property type="evidence" value="ECO:0007669"/>
    <property type="project" value="UniProtKB-UniRule"/>
</dbReference>
<dbReference type="GO" id="GO:0015267">
    <property type="term" value="F:channel activity"/>
    <property type="evidence" value="ECO:0007669"/>
    <property type="project" value="UniProtKB-KW"/>
</dbReference>
<dbReference type="GO" id="GO:0046872">
    <property type="term" value="F:metal ion binding"/>
    <property type="evidence" value="ECO:0007669"/>
    <property type="project" value="UniProtKB-UniRule"/>
</dbReference>
<dbReference type="GO" id="GO:0090729">
    <property type="term" value="F:toxin activity"/>
    <property type="evidence" value="ECO:0007669"/>
    <property type="project" value="UniProtKB-UniRule"/>
</dbReference>
<dbReference type="GO" id="GO:0034220">
    <property type="term" value="P:monoatomic ion transmembrane transport"/>
    <property type="evidence" value="ECO:0007669"/>
    <property type="project" value="UniProtKB-KW"/>
</dbReference>
<dbReference type="GO" id="GO:0039520">
    <property type="term" value="P:symbiont-mediated activation of host autophagy"/>
    <property type="evidence" value="ECO:0007669"/>
    <property type="project" value="UniProtKB-KW"/>
</dbReference>
<dbReference type="GO" id="GO:0016032">
    <property type="term" value="P:viral process"/>
    <property type="evidence" value="ECO:0007669"/>
    <property type="project" value="UniProtKB-UniRule"/>
</dbReference>
<dbReference type="Gene3D" id="1.20.5.430">
    <property type="match status" value="1"/>
</dbReference>
<dbReference type="HAMAP" id="MF_04091">
    <property type="entry name" value="ROTA_NSP4"/>
    <property type="match status" value="1"/>
</dbReference>
<dbReference type="InterPro" id="IPR002107">
    <property type="entry name" value="Rotavirus_NSP4"/>
</dbReference>
<dbReference type="Pfam" id="PF01452">
    <property type="entry name" value="Rota_NSP4"/>
    <property type="match status" value="1"/>
</dbReference>
<dbReference type="SUPFAM" id="SSF58030">
    <property type="entry name" value="Rotavirus nonstructural proteins"/>
    <property type="match status" value="1"/>
</dbReference>
<proteinExistence type="evidence at transcript level"/>
<protein>
    <recommendedName>
        <fullName evidence="1">Non-structural glycoprotein 4</fullName>
        <shortName evidence="1">NSP4</shortName>
    </recommendedName>
    <alternativeName>
        <fullName evidence="1">NCVP5</fullName>
    </alternativeName>
    <alternativeName>
        <fullName evidence="1">NS28</fullName>
    </alternativeName>
</protein>
<organismHost>
    <name type="scientific">Sus scrofa</name>
    <name type="common">Pig</name>
    <dbReference type="NCBI Taxonomy" id="9823"/>
</organismHost>
<feature type="chain" id="PRO_0000369492" description="Non-structural glycoprotein 4">
    <location>
        <begin position="1"/>
        <end position="175"/>
    </location>
</feature>
<feature type="topological domain" description="Lumenal" evidence="1">
    <location>
        <begin position="1"/>
        <end position="28"/>
    </location>
</feature>
<feature type="transmembrane region" description="Helical; Signal-anchor for type III membrane protein" evidence="1">
    <location>
        <begin position="29"/>
        <end position="51"/>
    </location>
</feature>
<feature type="topological domain" description="Cytoplasmic" evidence="1">
    <location>
        <begin position="52"/>
        <end position="175"/>
    </location>
</feature>
<feature type="binding site" evidence="1">
    <location>
        <position position="120"/>
    </location>
    <ligand>
        <name>Ca(2+)</name>
        <dbReference type="ChEBI" id="CHEBI:29108"/>
    </ligand>
</feature>
<feature type="binding site" evidence="1">
    <location>
        <position position="123"/>
    </location>
    <ligand>
        <name>Ca(2+)</name>
        <dbReference type="ChEBI" id="CHEBI:29108"/>
    </ligand>
</feature>
<feature type="glycosylation site" description="N-linked (GlcNAc...) asparagine; by host" evidence="1">
    <location>
        <position position="8"/>
    </location>
</feature>
<feature type="glycosylation site" description="N-linked (GlcNAc...) asparagine; by host" evidence="1">
    <location>
        <position position="18"/>
    </location>
</feature>
<comment type="function">
    <text evidence="1">Plays an essential role in the virus replication cycle by acting as a viroporin. Creates a pore in the host endoplasmic reticulum and as a consequence releases Ca(2+) in the cytoplasm of infected cell. In turn, high levels of cytoplasmic calcium trigger membrane trafficking and transport of viral ER-associated proteins to viroplasms, sites of viral genome replication and immature particle assembly.</text>
</comment>
<comment type="function">
    <text evidence="1">The secreted form acts as an enterotoxin that causes phospholipase C-dependent elevation of the intracellular calcium concentration in host intestinal mucosa cells. Increased concentration of intracellular calcium disrupts the cytoskeleton and the tight junctions, raising the paracellular permeability. Potentiates chloride ion secretion through a calcium ion-dependent signaling pathway, inducing age-dependent diarrhea. To perform this enterotoxigenic role in vivo, NSP4 is released from infected enterocytes in a soluble form capable of diffusing within the intestinal lumen and interacting with host plasma membrane receptors on neighboring epithelial cells such as integrins ITGA1/ITGB1 and ITGA2/ITGB1.</text>
</comment>
<comment type="subunit">
    <text evidence="1">Homotetramer. Interacts with the immature particle in the viroplasm. Interacts with host CAV1, early and late in infection. Interacts with host integrin ITGA1/ITGB1 heterodimer. Interacts with host integrin ITGA2/ITGB1 heterodimer. Interaction with microtubules blocks trafficking to the Golgi apparatus.</text>
</comment>
<comment type="subcellular location">
    <subcellularLocation>
        <location evidence="1">Host rough endoplasmic reticulum membrane</location>
        <topology evidence="1">Single-pass type III membrane protein</topology>
    </subcellularLocation>
    <subcellularLocation>
        <location evidence="1">Host membrane</location>
        <location evidence="1">Host caveola</location>
        <topology evidence="1">Single-pass type III membrane protein</topology>
    </subcellularLocation>
    <subcellularLocation>
        <location evidence="1">Secreted</location>
    </subcellularLocation>
    <text evidence="1">NSP4 also localizes in vesicular structures which contain autophagosomal markers and associate with viroplasms in virus-infected cells. Additionally, a soluble form of glycosylated NSP4 is secreted despite retention of its transmembrane domain.</text>
</comment>
<comment type="domain">
    <text evidence="1">Binds 1 calcium ion per tetramer.</text>
</comment>
<comment type="PTM">
    <text evidence="1">The N-glycosyl content is primarily Man(9)GlcNAc, with a small amount of Man(8)GlcNAc.</text>
</comment>
<comment type="similarity">
    <text evidence="1">Belongs to the rotavirus NSP4 family.</text>
</comment>
<accession>Q06381</accession>
<keyword id="KW-1072">Activation of host autophagy by virus</keyword>
<keyword id="KW-0106">Calcium</keyword>
<keyword id="KW-0260">Enterotoxin</keyword>
<keyword id="KW-0325">Glycoprotein</keyword>
<keyword id="KW-1038">Host endoplasmic reticulum</keyword>
<keyword id="KW-1043">Host membrane</keyword>
<keyword id="KW-0945">Host-virus interaction</keyword>
<keyword id="KW-0407">Ion channel</keyword>
<keyword id="KW-0406">Ion transport</keyword>
<keyword id="KW-0472">Membrane</keyword>
<keyword id="KW-0479">Metal-binding</keyword>
<keyword id="KW-0964">Secreted</keyword>
<keyword id="KW-0735">Signal-anchor</keyword>
<keyword id="KW-0800">Toxin</keyword>
<keyword id="KW-0812">Transmembrane</keyword>
<keyword id="KW-1133">Transmembrane helix</keyword>
<keyword id="KW-0813">Transport</keyword>
<keyword id="KW-1182">Viral ion channel</keyword>
<keyword id="KW-0843">Virulence</keyword>
<organism>
    <name type="scientific">Rotavirus A (strain RVA/Pig/Mexico/YM/1983/G11P9[7])</name>
    <name type="common">RV-A</name>
    <dbReference type="NCBI Taxonomy" id="10919"/>
    <lineage>
        <taxon>Viruses</taxon>
        <taxon>Riboviria</taxon>
        <taxon>Orthornavirae</taxon>
        <taxon>Duplornaviricota</taxon>
        <taxon>Resentoviricetes</taxon>
        <taxon>Reovirales</taxon>
        <taxon>Sedoreoviridae</taxon>
        <taxon>Rotavirus</taxon>
        <taxon>Rotavirus A</taxon>
    </lineage>
</organism>
<reference key="1">
    <citation type="journal article" date="1993" name="J. Gen. Virol.">
        <title>Sequence analysis of rotavirus YM VP6 and NS28 proteins.</title>
        <authorList>
            <person name="Lopez S."/>
            <person name="Arias C.F."/>
        </authorList>
    </citation>
    <scope>NUCLEOTIDE SEQUENCE [MRNA]</scope>
</reference>
<sequence length="175" mass="20246">MDKLADLNYTLSVITLMNDTLHSIIQDPGMAYFPYIASVLTVLFALHKASIPTMKIALKTSKCSYKVIKYCMVTIINTLLKLAGYKEQVTTKDEIEQQMDRIVKEMRRQPRMIDKLTTREIEQVELLKRIHDKLVTRPVDVIDMSKEFNQKNIKTLDEWESGKNPYEPSEVTASM</sequence>
<evidence type="ECO:0000255" key="1">
    <source>
        <dbReference type="HAMAP-Rule" id="MF_04091"/>
    </source>
</evidence>
<name>NSP4_ROTPY</name>